<proteinExistence type="inferred from homology"/>
<sequence length="598" mass="66642">MRTEYCGQLNLSHVGQSVTLCGWVNRRRDLGGLIFIDMRDREGIVQVFFDPDHKAAFEQASELRNEFCIQITGTVRARPDSQINKDMSTGEVEIFANTLNIINRSEPLPLDSNQINSEEQRLKYRYLDLRRPEMADRLKSRAKITSFVRRFMDDHGFLDIETPMLTKATPEGARDYLVPSRVHKGKFYALPQSPQLFKQLLMMSGFDRYYQIVKCFRDEDLRADRQPEFTQIDVETSFMSADQVREVMEKLVRELWQETKGVDLGDFPVMTFAEAMRRYGSDKPDLRNPLELVDVASLVKDVEFKVFSGPANDAKGRVAALRVPGGAQLSRKQIDEYGQFVGIYGAKGLAWLKVNDRAAGLEGVQSPIAKFLSAEVLDAILVATQAESGDILFFGADSYKIVTDAMGALRLKVGRDLELTRLGTWAPLWVVDFPMFEDDSEGGLTAMHHPFTAPKDMSPEQLAAAPTTAIANAYDMVINGYEVGGGSVRIHRTEMQQTVFGILGITEDEQREKFGFLLDALKFGTPPHAGLAFGLDRLVMLLTGTDNIRDVIAFPKTTAAACLMTDAPSFANPASLQELSISVVAKKGTTDAGAEENQ</sequence>
<keyword id="KW-0030">Aminoacyl-tRNA synthetase</keyword>
<keyword id="KW-0067">ATP-binding</keyword>
<keyword id="KW-0963">Cytoplasm</keyword>
<keyword id="KW-0436">Ligase</keyword>
<keyword id="KW-0547">Nucleotide-binding</keyword>
<keyword id="KW-0648">Protein biosynthesis</keyword>
<gene>
    <name evidence="1" type="primary">aspS</name>
    <name type="ordered locus">YpsIP31758_2035</name>
</gene>
<reference key="1">
    <citation type="journal article" date="2007" name="PLoS Genet.">
        <title>The complete genome sequence of Yersinia pseudotuberculosis IP31758, the causative agent of Far East scarlet-like fever.</title>
        <authorList>
            <person name="Eppinger M."/>
            <person name="Rosovitz M.J."/>
            <person name="Fricke W.F."/>
            <person name="Rasko D.A."/>
            <person name="Kokorina G."/>
            <person name="Fayolle C."/>
            <person name="Lindler L.E."/>
            <person name="Carniel E."/>
            <person name="Ravel J."/>
        </authorList>
    </citation>
    <scope>NUCLEOTIDE SEQUENCE [LARGE SCALE GENOMIC DNA]</scope>
    <source>
        <strain>IP 31758</strain>
    </source>
</reference>
<dbReference type="EC" id="6.1.1.12" evidence="1"/>
<dbReference type="EMBL" id="CP000720">
    <property type="protein sequence ID" value="ABS48699.1"/>
    <property type="molecule type" value="Genomic_DNA"/>
</dbReference>
<dbReference type="RefSeq" id="WP_002211204.1">
    <property type="nucleotide sequence ID" value="NC_009708.1"/>
</dbReference>
<dbReference type="SMR" id="A7FID0"/>
<dbReference type="GeneID" id="57976608"/>
<dbReference type="KEGG" id="ypi:YpsIP31758_2035"/>
<dbReference type="HOGENOM" id="CLU_014330_3_2_6"/>
<dbReference type="Proteomes" id="UP000002412">
    <property type="component" value="Chromosome"/>
</dbReference>
<dbReference type="GO" id="GO:0005737">
    <property type="term" value="C:cytoplasm"/>
    <property type="evidence" value="ECO:0007669"/>
    <property type="project" value="UniProtKB-SubCell"/>
</dbReference>
<dbReference type="GO" id="GO:0004815">
    <property type="term" value="F:aspartate-tRNA ligase activity"/>
    <property type="evidence" value="ECO:0007669"/>
    <property type="project" value="UniProtKB-UniRule"/>
</dbReference>
<dbReference type="GO" id="GO:0005524">
    <property type="term" value="F:ATP binding"/>
    <property type="evidence" value="ECO:0007669"/>
    <property type="project" value="UniProtKB-UniRule"/>
</dbReference>
<dbReference type="GO" id="GO:0003676">
    <property type="term" value="F:nucleic acid binding"/>
    <property type="evidence" value="ECO:0007669"/>
    <property type="project" value="InterPro"/>
</dbReference>
<dbReference type="GO" id="GO:0006422">
    <property type="term" value="P:aspartyl-tRNA aminoacylation"/>
    <property type="evidence" value="ECO:0007669"/>
    <property type="project" value="UniProtKB-UniRule"/>
</dbReference>
<dbReference type="CDD" id="cd00777">
    <property type="entry name" value="AspRS_core"/>
    <property type="match status" value="1"/>
</dbReference>
<dbReference type="CDD" id="cd04317">
    <property type="entry name" value="EcAspRS_like_N"/>
    <property type="match status" value="1"/>
</dbReference>
<dbReference type="FunFam" id="2.40.50.140:FF:000080">
    <property type="entry name" value="Aspartate--tRNA ligase"/>
    <property type="match status" value="1"/>
</dbReference>
<dbReference type="Gene3D" id="3.30.930.10">
    <property type="entry name" value="Bira Bifunctional Protein, Domain 2"/>
    <property type="match status" value="1"/>
</dbReference>
<dbReference type="Gene3D" id="3.30.1360.30">
    <property type="entry name" value="GAD-like domain"/>
    <property type="match status" value="1"/>
</dbReference>
<dbReference type="Gene3D" id="2.40.50.140">
    <property type="entry name" value="Nucleic acid-binding proteins"/>
    <property type="match status" value="1"/>
</dbReference>
<dbReference type="HAMAP" id="MF_00044">
    <property type="entry name" value="Asp_tRNA_synth_type1"/>
    <property type="match status" value="1"/>
</dbReference>
<dbReference type="InterPro" id="IPR004364">
    <property type="entry name" value="Aa-tRNA-synt_II"/>
</dbReference>
<dbReference type="InterPro" id="IPR006195">
    <property type="entry name" value="aa-tRNA-synth_II"/>
</dbReference>
<dbReference type="InterPro" id="IPR045864">
    <property type="entry name" value="aa-tRNA-synth_II/BPL/LPL"/>
</dbReference>
<dbReference type="InterPro" id="IPR004524">
    <property type="entry name" value="Asp-tRNA-ligase_1"/>
</dbReference>
<dbReference type="InterPro" id="IPR047089">
    <property type="entry name" value="Asp-tRNA-ligase_1_N"/>
</dbReference>
<dbReference type="InterPro" id="IPR002312">
    <property type="entry name" value="Asp/Asn-tRNA-synth_IIb"/>
</dbReference>
<dbReference type="InterPro" id="IPR047090">
    <property type="entry name" value="AspRS_core"/>
</dbReference>
<dbReference type="InterPro" id="IPR004115">
    <property type="entry name" value="GAD-like_sf"/>
</dbReference>
<dbReference type="InterPro" id="IPR029351">
    <property type="entry name" value="GAD_dom"/>
</dbReference>
<dbReference type="InterPro" id="IPR012340">
    <property type="entry name" value="NA-bd_OB-fold"/>
</dbReference>
<dbReference type="InterPro" id="IPR004365">
    <property type="entry name" value="NA-bd_OB_tRNA"/>
</dbReference>
<dbReference type="NCBIfam" id="TIGR00459">
    <property type="entry name" value="aspS_bact"/>
    <property type="match status" value="1"/>
</dbReference>
<dbReference type="NCBIfam" id="NF001750">
    <property type="entry name" value="PRK00476.1"/>
    <property type="match status" value="1"/>
</dbReference>
<dbReference type="PANTHER" id="PTHR22594:SF5">
    <property type="entry name" value="ASPARTATE--TRNA LIGASE, MITOCHONDRIAL"/>
    <property type="match status" value="1"/>
</dbReference>
<dbReference type="PANTHER" id="PTHR22594">
    <property type="entry name" value="ASPARTYL/LYSYL-TRNA SYNTHETASE"/>
    <property type="match status" value="1"/>
</dbReference>
<dbReference type="Pfam" id="PF02938">
    <property type="entry name" value="GAD"/>
    <property type="match status" value="1"/>
</dbReference>
<dbReference type="Pfam" id="PF00152">
    <property type="entry name" value="tRNA-synt_2"/>
    <property type="match status" value="1"/>
</dbReference>
<dbReference type="Pfam" id="PF01336">
    <property type="entry name" value="tRNA_anti-codon"/>
    <property type="match status" value="1"/>
</dbReference>
<dbReference type="PRINTS" id="PR01042">
    <property type="entry name" value="TRNASYNTHASP"/>
</dbReference>
<dbReference type="SUPFAM" id="SSF55681">
    <property type="entry name" value="Class II aaRS and biotin synthetases"/>
    <property type="match status" value="1"/>
</dbReference>
<dbReference type="SUPFAM" id="SSF55261">
    <property type="entry name" value="GAD domain-like"/>
    <property type="match status" value="1"/>
</dbReference>
<dbReference type="SUPFAM" id="SSF50249">
    <property type="entry name" value="Nucleic acid-binding proteins"/>
    <property type="match status" value="1"/>
</dbReference>
<dbReference type="PROSITE" id="PS50862">
    <property type="entry name" value="AA_TRNA_LIGASE_II"/>
    <property type="match status" value="1"/>
</dbReference>
<accession>A7FID0</accession>
<comment type="function">
    <text evidence="1">Catalyzes the attachment of L-aspartate to tRNA(Asp) in a two-step reaction: L-aspartate is first activated by ATP to form Asp-AMP and then transferred to the acceptor end of tRNA(Asp).</text>
</comment>
<comment type="catalytic activity">
    <reaction evidence="1">
        <text>tRNA(Asp) + L-aspartate + ATP = L-aspartyl-tRNA(Asp) + AMP + diphosphate</text>
        <dbReference type="Rhea" id="RHEA:19649"/>
        <dbReference type="Rhea" id="RHEA-COMP:9660"/>
        <dbReference type="Rhea" id="RHEA-COMP:9678"/>
        <dbReference type="ChEBI" id="CHEBI:29991"/>
        <dbReference type="ChEBI" id="CHEBI:30616"/>
        <dbReference type="ChEBI" id="CHEBI:33019"/>
        <dbReference type="ChEBI" id="CHEBI:78442"/>
        <dbReference type="ChEBI" id="CHEBI:78516"/>
        <dbReference type="ChEBI" id="CHEBI:456215"/>
        <dbReference type="EC" id="6.1.1.12"/>
    </reaction>
</comment>
<comment type="subunit">
    <text evidence="1">Homodimer.</text>
</comment>
<comment type="subcellular location">
    <subcellularLocation>
        <location evidence="1">Cytoplasm</location>
    </subcellularLocation>
</comment>
<comment type="similarity">
    <text evidence="1">Belongs to the class-II aminoacyl-tRNA synthetase family. Type 1 subfamily.</text>
</comment>
<evidence type="ECO:0000255" key="1">
    <source>
        <dbReference type="HAMAP-Rule" id="MF_00044"/>
    </source>
</evidence>
<protein>
    <recommendedName>
        <fullName evidence="1">Aspartate--tRNA ligase</fullName>
        <ecNumber evidence="1">6.1.1.12</ecNumber>
    </recommendedName>
    <alternativeName>
        <fullName evidence="1">Aspartyl-tRNA synthetase</fullName>
        <shortName evidence="1">AspRS</shortName>
    </alternativeName>
</protein>
<organism>
    <name type="scientific">Yersinia pseudotuberculosis serotype O:1b (strain IP 31758)</name>
    <dbReference type="NCBI Taxonomy" id="349747"/>
    <lineage>
        <taxon>Bacteria</taxon>
        <taxon>Pseudomonadati</taxon>
        <taxon>Pseudomonadota</taxon>
        <taxon>Gammaproteobacteria</taxon>
        <taxon>Enterobacterales</taxon>
        <taxon>Yersiniaceae</taxon>
        <taxon>Yersinia</taxon>
    </lineage>
</organism>
<feature type="chain" id="PRO_1000057308" description="Aspartate--tRNA ligase">
    <location>
        <begin position="1"/>
        <end position="598"/>
    </location>
</feature>
<feature type="region of interest" description="Aspartate" evidence="1">
    <location>
        <begin position="195"/>
        <end position="198"/>
    </location>
</feature>
<feature type="binding site" evidence="1">
    <location>
        <position position="171"/>
    </location>
    <ligand>
        <name>L-aspartate</name>
        <dbReference type="ChEBI" id="CHEBI:29991"/>
    </ligand>
</feature>
<feature type="binding site" evidence="1">
    <location>
        <begin position="217"/>
        <end position="219"/>
    </location>
    <ligand>
        <name>ATP</name>
        <dbReference type="ChEBI" id="CHEBI:30616"/>
    </ligand>
</feature>
<feature type="binding site" evidence="1">
    <location>
        <position position="217"/>
    </location>
    <ligand>
        <name>L-aspartate</name>
        <dbReference type="ChEBI" id="CHEBI:29991"/>
    </ligand>
</feature>
<feature type="binding site" evidence="1">
    <location>
        <position position="226"/>
    </location>
    <ligand>
        <name>ATP</name>
        <dbReference type="ChEBI" id="CHEBI:30616"/>
    </ligand>
</feature>
<feature type="binding site" evidence="1">
    <location>
        <position position="448"/>
    </location>
    <ligand>
        <name>L-aspartate</name>
        <dbReference type="ChEBI" id="CHEBI:29991"/>
    </ligand>
</feature>
<feature type="binding site" evidence="1">
    <location>
        <position position="482"/>
    </location>
    <ligand>
        <name>ATP</name>
        <dbReference type="ChEBI" id="CHEBI:30616"/>
    </ligand>
</feature>
<feature type="binding site" evidence="1">
    <location>
        <position position="489"/>
    </location>
    <ligand>
        <name>L-aspartate</name>
        <dbReference type="ChEBI" id="CHEBI:29991"/>
    </ligand>
</feature>
<feature type="binding site" evidence="1">
    <location>
        <begin position="534"/>
        <end position="537"/>
    </location>
    <ligand>
        <name>ATP</name>
        <dbReference type="ChEBI" id="CHEBI:30616"/>
    </ligand>
</feature>
<name>SYD_YERP3</name>